<comment type="function">
    <text evidence="1">Positive regulator of neurite outgrowth by stabilizing myosin regulatory light chain (MRLC). It prevents MIR-mediated MRLC ubiquitination and its subsequent proteasomal degradation (By similarity).</text>
</comment>
<comment type="subunit">
    <text evidence="1">Interacts with MYLIP/MIR.</text>
</comment>
<comment type="interaction">
    <interactant intactId="EBI-8321111">
        <id>Q9QXT0</id>
    </interactant>
    <interactant intactId="EBI-1226344">
        <id>Q9Z2B5</id>
        <label>Eif2ak3</label>
    </interactant>
    <organismsDiffer>false</organismsDiffer>
    <experiments>7</experiments>
</comment>
<comment type="interaction">
    <interactant intactId="EBI-8321111">
        <id>Q9QXT0</id>
    </interactant>
    <interactant intactId="EBI-354921">
        <id>P11021</id>
        <label>HSPA5</label>
    </interactant>
    <organismsDiffer>true</organismsDiffer>
    <experiments>2</experiments>
</comment>
<comment type="subcellular location">
    <subcellularLocation>
        <location evidence="4">Endoplasmic reticulum</location>
    </subcellularLocation>
</comment>
<comment type="similarity">
    <text evidence="5">Belongs to the canopy family.</text>
</comment>
<protein>
    <recommendedName>
        <fullName>Protein canopy homolog 2</fullName>
    </recommendedName>
    <alternativeName>
        <fullName>MIR-interacting saposin-like protein</fullName>
    </alternativeName>
    <alternativeName>
        <fullName>Putative secreted protein ZSIG9</fullName>
    </alternativeName>
    <alternativeName>
        <fullName>Transmembrane protein 4</fullName>
    </alternativeName>
</protein>
<feature type="signal peptide" evidence="2">
    <location>
        <begin position="1"/>
        <end position="20"/>
    </location>
</feature>
<feature type="chain" id="PRO_0000031667" description="Protein canopy homolog 2">
    <location>
        <begin position="21"/>
        <end position="182"/>
    </location>
</feature>
<feature type="domain" description="Saposin B-type" evidence="3">
    <location>
        <begin position="24"/>
        <end position="175"/>
    </location>
</feature>
<feature type="short sequence motif" description="Prevents secretion from ER" evidence="4">
    <location>
        <begin position="179"/>
        <end position="182"/>
    </location>
</feature>
<feature type="modified residue" description="Phosphoserine" evidence="6">
    <location>
        <position position="115"/>
    </location>
</feature>
<feature type="disulfide bond" evidence="3">
    <location>
        <begin position="28"/>
        <end position="171"/>
    </location>
</feature>
<feature type="disulfide bond" evidence="3">
    <location>
        <begin position="31"/>
        <end position="164"/>
    </location>
</feature>
<feature type="disulfide bond" evidence="3">
    <location>
        <begin position="86"/>
        <end position="137"/>
    </location>
</feature>
<evidence type="ECO:0000250" key="1"/>
<evidence type="ECO:0000255" key="2"/>
<evidence type="ECO:0000255" key="3">
    <source>
        <dbReference type="PROSITE-ProRule" id="PRU00415"/>
    </source>
</evidence>
<evidence type="ECO:0000255" key="4">
    <source>
        <dbReference type="PROSITE-ProRule" id="PRU10138"/>
    </source>
</evidence>
<evidence type="ECO:0000305" key="5"/>
<evidence type="ECO:0007744" key="6">
    <source>
    </source>
</evidence>
<accession>Q9QXT0</accession>
<accession>Q3UBH8</accession>
<sequence length="182" mass="20767">MKGWGWLALLLGVLLGTAWARRSQDLHCGACRALVDELEWEIARVDPKKTIQMGSFRINPDGSQSVVEVPYARSEAHLTELLEEVCDRMKEYGEQIDPSTHRKNYVRVVSRNGESSELDLQGIRIDSDISGTLKFACESIVEEYEDELIEFFSREADNVKDKLCSKRTDLCDHALHRSHDEL</sequence>
<keyword id="KW-1015">Disulfide bond</keyword>
<keyword id="KW-0256">Endoplasmic reticulum</keyword>
<keyword id="KW-0597">Phosphoprotein</keyword>
<keyword id="KW-1185">Reference proteome</keyword>
<keyword id="KW-0732">Signal</keyword>
<name>CNPY2_MOUSE</name>
<gene>
    <name type="primary">Cnpy2</name>
    <name type="synonym">Msap</name>
    <name type="synonym">Tmem4</name>
    <name type="synonym">Zsig9</name>
</gene>
<reference key="1">
    <citation type="submission" date="1999-09" db="EMBL/GenBank/DDBJ databases">
        <title>Mus musculus putative secreted protein.</title>
        <authorList>
            <person name="Sheppard P."/>
            <person name="Jelinek L."/>
            <person name="Whitmore T."/>
            <person name="Blumberg H."/>
            <person name="Lehner J."/>
            <person name="O'Hara P."/>
        </authorList>
    </citation>
    <scope>NUCLEOTIDE SEQUENCE [MRNA]</scope>
</reference>
<reference key="2">
    <citation type="journal article" date="2005" name="Science">
        <title>The transcriptional landscape of the mammalian genome.</title>
        <authorList>
            <person name="Carninci P."/>
            <person name="Kasukawa T."/>
            <person name="Katayama S."/>
            <person name="Gough J."/>
            <person name="Frith M.C."/>
            <person name="Maeda N."/>
            <person name="Oyama R."/>
            <person name="Ravasi T."/>
            <person name="Lenhard B."/>
            <person name="Wells C."/>
            <person name="Kodzius R."/>
            <person name="Shimokawa K."/>
            <person name="Bajic V.B."/>
            <person name="Brenner S.E."/>
            <person name="Batalov S."/>
            <person name="Forrest A.R."/>
            <person name="Zavolan M."/>
            <person name="Davis M.J."/>
            <person name="Wilming L.G."/>
            <person name="Aidinis V."/>
            <person name="Allen J.E."/>
            <person name="Ambesi-Impiombato A."/>
            <person name="Apweiler R."/>
            <person name="Aturaliya R.N."/>
            <person name="Bailey T.L."/>
            <person name="Bansal M."/>
            <person name="Baxter L."/>
            <person name="Beisel K.W."/>
            <person name="Bersano T."/>
            <person name="Bono H."/>
            <person name="Chalk A.M."/>
            <person name="Chiu K.P."/>
            <person name="Choudhary V."/>
            <person name="Christoffels A."/>
            <person name="Clutterbuck D.R."/>
            <person name="Crowe M.L."/>
            <person name="Dalla E."/>
            <person name="Dalrymple B.P."/>
            <person name="de Bono B."/>
            <person name="Della Gatta G."/>
            <person name="di Bernardo D."/>
            <person name="Down T."/>
            <person name="Engstrom P."/>
            <person name="Fagiolini M."/>
            <person name="Faulkner G."/>
            <person name="Fletcher C.F."/>
            <person name="Fukushima T."/>
            <person name="Furuno M."/>
            <person name="Futaki S."/>
            <person name="Gariboldi M."/>
            <person name="Georgii-Hemming P."/>
            <person name="Gingeras T.R."/>
            <person name="Gojobori T."/>
            <person name="Green R.E."/>
            <person name="Gustincich S."/>
            <person name="Harbers M."/>
            <person name="Hayashi Y."/>
            <person name="Hensch T.K."/>
            <person name="Hirokawa N."/>
            <person name="Hill D."/>
            <person name="Huminiecki L."/>
            <person name="Iacono M."/>
            <person name="Ikeo K."/>
            <person name="Iwama A."/>
            <person name="Ishikawa T."/>
            <person name="Jakt M."/>
            <person name="Kanapin A."/>
            <person name="Katoh M."/>
            <person name="Kawasawa Y."/>
            <person name="Kelso J."/>
            <person name="Kitamura H."/>
            <person name="Kitano H."/>
            <person name="Kollias G."/>
            <person name="Krishnan S.P."/>
            <person name="Kruger A."/>
            <person name="Kummerfeld S.K."/>
            <person name="Kurochkin I.V."/>
            <person name="Lareau L.F."/>
            <person name="Lazarevic D."/>
            <person name="Lipovich L."/>
            <person name="Liu J."/>
            <person name="Liuni S."/>
            <person name="McWilliam S."/>
            <person name="Madan Babu M."/>
            <person name="Madera M."/>
            <person name="Marchionni L."/>
            <person name="Matsuda H."/>
            <person name="Matsuzawa S."/>
            <person name="Miki H."/>
            <person name="Mignone F."/>
            <person name="Miyake S."/>
            <person name="Morris K."/>
            <person name="Mottagui-Tabar S."/>
            <person name="Mulder N."/>
            <person name="Nakano N."/>
            <person name="Nakauchi H."/>
            <person name="Ng P."/>
            <person name="Nilsson R."/>
            <person name="Nishiguchi S."/>
            <person name="Nishikawa S."/>
            <person name="Nori F."/>
            <person name="Ohara O."/>
            <person name="Okazaki Y."/>
            <person name="Orlando V."/>
            <person name="Pang K.C."/>
            <person name="Pavan W.J."/>
            <person name="Pavesi G."/>
            <person name="Pesole G."/>
            <person name="Petrovsky N."/>
            <person name="Piazza S."/>
            <person name="Reed J."/>
            <person name="Reid J.F."/>
            <person name="Ring B.Z."/>
            <person name="Ringwald M."/>
            <person name="Rost B."/>
            <person name="Ruan Y."/>
            <person name="Salzberg S.L."/>
            <person name="Sandelin A."/>
            <person name="Schneider C."/>
            <person name="Schoenbach C."/>
            <person name="Sekiguchi K."/>
            <person name="Semple C.A."/>
            <person name="Seno S."/>
            <person name="Sessa L."/>
            <person name="Sheng Y."/>
            <person name="Shibata Y."/>
            <person name="Shimada H."/>
            <person name="Shimada K."/>
            <person name="Silva D."/>
            <person name="Sinclair B."/>
            <person name="Sperling S."/>
            <person name="Stupka E."/>
            <person name="Sugiura K."/>
            <person name="Sultana R."/>
            <person name="Takenaka Y."/>
            <person name="Taki K."/>
            <person name="Tammoja K."/>
            <person name="Tan S.L."/>
            <person name="Tang S."/>
            <person name="Taylor M.S."/>
            <person name="Tegner J."/>
            <person name="Teichmann S.A."/>
            <person name="Ueda H.R."/>
            <person name="van Nimwegen E."/>
            <person name="Verardo R."/>
            <person name="Wei C.L."/>
            <person name="Yagi K."/>
            <person name="Yamanishi H."/>
            <person name="Zabarovsky E."/>
            <person name="Zhu S."/>
            <person name="Zimmer A."/>
            <person name="Hide W."/>
            <person name="Bult C."/>
            <person name="Grimmond S.M."/>
            <person name="Teasdale R.D."/>
            <person name="Liu E.T."/>
            <person name="Brusic V."/>
            <person name="Quackenbush J."/>
            <person name="Wahlestedt C."/>
            <person name="Mattick J.S."/>
            <person name="Hume D.A."/>
            <person name="Kai C."/>
            <person name="Sasaki D."/>
            <person name="Tomaru Y."/>
            <person name="Fukuda S."/>
            <person name="Kanamori-Katayama M."/>
            <person name="Suzuki M."/>
            <person name="Aoki J."/>
            <person name="Arakawa T."/>
            <person name="Iida J."/>
            <person name="Imamura K."/>
            <person name="Itoh M."/>
            <person name="Kato T."/>
            <person name="Kawaji H."/>
            <person name="Kawagashira N."/>
            <person name="Kawashima T."/>
            <person name="Kojima M."/>
            <person name="Kondo S."/>
            <person name="Konno H."/>
            <person name="Nakano K."/>
            <person name="Ninomiya N."/>
            <person name="Nishio T."/>
            <person name="Okada M."/>
            <person name="Plessy C."/>
            <person name="Shibata K."/>
            <person name="Shiraki T."/>
            <person name="Suzuki S."/>
            <person name="Tagami M."/>
            <person name="Waki K."/>
            <person name="Watahiki A."/>
            <person name="Okamura-Oho Y."/>
            <person name="Suzuki H."/>
            <person name="Kawai J."/>
            <person name="Hayashizaki Y."/>
        </authorList>
    </citation>
    <scope>NUCLEOTIDE SEQUENCE [LARGE SCALE MRNA]</scope>
    <source>
        <strain>C57BL/6J</strain>
        <tissue>Bone marrow</tissue>
        <tissue>Hippocampus</tissue>
        <tissue>Pancreas</tissue>
        <tissue>Pituitary</tissue>
    </source>
</reference>
<reference key="3">
    <citation type="journal article" date="2004" name="Genome Res.">
        <title>The status, quality, and expansion of the NIH full-length cDNA project: the Mammalian Gene Collection (MGC).</title>
        <authorList>
            <consortium name="The MGC Project Team"/>
        </authorList>
    </citation>
    <scope>NUCLEOTIDE SEQUENCE [LARGE SCALE MRNA]</scope>
    <source>
        <strain>129</strain>
        <tissue>Mammary tumor</tissue>
    </source>
</reference>
<reference key="4">
    <citation type="journal article" date="2007" name="Proc. Natl. Acad. Sci. U.S.A.">
        <title>Large-scale phosphorylation analysis of mouse liver.</title>
        <authorList>
            <person name="Villen J."/>
            <person name="Beausoleil S.A."/>
            <person name="Gerber S.A."/>
            <person name="Gygi S.P."/>
        </authorList>
    </citation>
    <scope>PHOSPHORYLATION [LARGE SCALE ANALYSIS] AT SER-115</scope>
    <scope>IDENTIFICATION BY MASS SPECTROMETRY [LARGE SCALE ANALYSIS]</scope>
    <source>
        <tissue>Liver</tissue>
    </source>
</reference>
<reference key="5">
    <citation type="journal article" date="2010" name="Cell">
        <title>A tissue-specific atlas of mouse protein phosphorylation and expression.</title>
        <authorList>
            <person name="Huttlin E.L."/>
            <person name="Jedrychowski M.P."/>
            <person name="Elias J.E."/>
            <person name="Goswami T."/>
            <person name="Rad R."/>
            <person name="Beausoleil S.A."/>
            <person name="Villen J."/>
            <person name="Haas W."/>
            <person name="Sowa M.E."/>
            <person name="Gygi S.P."/>
        </authorList>
    </citation>
    <scope>IDENTIFICATION BY MASS SPECTROMETRY [LARGE SCALE ANALYSIS]</scope>
    <source>
        <tissue>Brain</tissue>
        <tissue>Brown adipose tissue</tissue>
        <tissue>Heart</tissue>
        <tissue>Kidney</tissue>
        <tissue>Liver</tissue>
        <tissue>Lung</tissue>
        <tissue>Pancreas</tissue>
        <tissue>Spleen</tissue>
        <tissue>Testis</tissue>
    </source>
</reference>
<proteinExistence type="evidence at protein level"/>
<organism>
    <name type="scientific">Mus musculus</name>
    <name type="common">Mouse</name>
    <dbReference type="NCBI Taxonomy" id="10090"/>
    <lineage>
        <taxon>Eukaryota</taxon>
        <taxon>Metazoa</taxon>
        <taxon>Chordata</taxon>
        <taxon>Craniata</taxon>
        <taxon>Vertebrata</taxon>
        <taxon>Euteleostomi</taxon>
        <taxon>Mammalia</taxon>
        <taxon>Eutheria</taxon>
        <taxon>Euarchontoglires</taxon>
        <taxon>Glires</taxon>
        <taxon>Rodentia</taxon>
        <taxon>Myomorpha</taxon>
        <taxon>Muroidea</taxon>
        <taxon>Muridae</taxon>
        <taxon>Murinae</taxon>
        <taxon>Mus</taxon>
        <taxon>Mus</taxon>
    </lineage>
</organism>
<dbReference type="EMBL" id="AF186115">
    <property type="protein sequence ID" value="AAF01433.1"/>
    <property type="molecule type" value="mRNA"/>
</dbReference>
<dbReference type="EMBL" id="AK007914">
    <property type="protein sequence ID" value="BAB25346.1"/>
    <property type="molecule type" value="mRNA"/>
</dbReference>
<dbReference type="EMBL" id="AK013014">
    <property type="protein sequence ID" value="BAB28597.1"/>
    <property type="molecule type" value="mRNA"/>
</dbReference>
<dbReference type="EMBL" id="AK013568">
    <property type="protein sequence ID" value="BAB28909.1"/>
    <property type="molecule type" value="mRNA"/>
</dbReference>
<dbReference type="EMBL" id="AK019927">
    <property type="protein sequence ID" value="BAB31921.1"/>
    <property type="molecule type" value="mRNA"/>
</dbReference>
<dbReference type="EMBL" id="AK150953">
    <property type="protein sequence ID" value="BAE29986.1"/>
    <property type="molecule type" value="mRNA"/>
</dbReference>
<dbReference type="EMBL" id="BC008261">
    <property type="protein sequence ID" value="AAH08261.1"/>
    <property type="molecule type" value="mRNA"/>
</dbReference>
<dbReference type="CCDS" id="CCDS24272.1"/>
<dbReference type="RefSeq" id="NP_001416158.1">
    <property type="nucleotide sequence ID" value="NM_001429229.1"/>
</dbReference>
<dbReference type="RefSeq" id="NP_001416159.1">
    <property type="nucleotide sequence ID" value="NM_001429230.1"/>
</dbReference>
<dbReference type="RefSeq" id="NP_001416160.1">
    <property type="nucleotide sequence ID" value="NM_001429231.1"/>
</dbReference>
<dbReference type="RefSeq" id="NP_001416161.1">
    <property type="nucleotide sequence ID" value="NM_001429232.1"/>
</dbReference>
<dbReference type="RefSeq" id="NP_064337.1">
    <property type="nucleotide sequence ID" value="NM_019953.2"/>
</dbReference>
<dbReference type="RefSeq" id="XP_006513965.1">
    <property type="nucleotide sequence ID" value="XM_006513902.3"/>
</dbReference>
<dbReference type="SMR" id="Q9QXT0"/>
<dbReference type="BioGRID" id="208040">
    <property type="interactions" value="4"/>
</dbReference>
<dbReference type="FunCoup" id="Q9QXT0">
    <property type="interactions" value="2198"/>
</dbReference>
<dbReference type="IntAct" id="Q9QXT0">
    <property type="interactions" value="4"/>
</dbReference>
<dbReference type="MINT" id="Q9QXT0"/>
<dbReference type="STRING" id="10090.ENSMUSP00000151918"/>
<dbReference type="iPTMnet" id="Q9QXT0"/>
<dbReference type="PhosphoSitePlus" id="Q9QXT0"/>
<dbReference type="SwissPalm" id="Q9QXT0"/>
<dbReference type="REPRODUCTION-2DPAGE" id="IPI00135512"/>
<dbReference type="jPOST" id="Q9QXT0"/>
<dbReference type="PaxDb" id="10090-ENSMUSP00000026446"/>
<dbReference type="PeptideAtlas" id="Q9QXT0"/>
<dbReference type="ProteomicsDB" id="283655"/>
<dbReference type="Pumba" id="Q9QXT0"/>
<dbReference type="TopDownProteomics" id="Q9QXT0"/>
<dbReference type="DNASU" id="56530"/>
<dbReference type="Ensembl" id="ENSMUST00000026446.4">
    <property type="protein sequence ID" value="ENSMUSP00000026446.3"/>
    <property type="gene ID" value="ENSMUSG00000025381.4"/>
</dbReference>
<dbReference type="Ensembl" id="ENSMUST00000219037.2">
    <property type="protein sequence ID" value="ENSMUSP00000151918.2"/>
    <property type="gene ID" value="ENSMUSG00000025381.4"/>
</dbReference>
<dbReference type="GeneID" id="56530"/>
<dbReference type="KEGG" id="mmu:56530"/>
<dbReference type="UCSC" id="uc007hmi.1">
    <property type="organism name" value="mouse"/>
</dbReference>
<dbReference type="AGR" id="MGI:1928477"/>
<dbReference type="CTD" id="10330"/>
<dbReference type="MGI" id="MGI:1928477">
    <property type="gene designation" value="Cnpy2"/>
</dbReference>
<dbReference type="VEuPathDB" id="HostDB:ENSMUSG00000025381"/>
<dbReference type="eggNOG" id="KOG3782">
    <property type="taxonomic scope" value="Eukaryota"/>
</dbReference>
<dbReference type="GeneTree" id="ENSGT00940000161158"/>
<dbReference type="HOGENOM" id="CLU_095726_2_1_1"/>
<dbReference type="InParanoid" id="Q9QXT0"/>
<dbReference type="OMA" id="HLKCLVC"/>
<dbReference type="OrthoDB" id="192915at2759"/>
<dbReference type="PhylomeDB" id="Q9QXT0"/>
<dbReference type="TreeFam" id="TF318578"/>
<dbReference type="BioGRID-ORCS" id="56530">
    <property type="hits" value="1 hit in 78 CRISPR screens"/>
</dbReference>
<dbReference type="ChiTaRS" id="Cnpy2">
    <property type="organism name" value="mouse"/>
</dbReference>
<dbReference type="PRO" id="PR:Q9QXT0"/>
<dbReference type="Proteomes" id="UP000000589">
    <property type="component" value="Chromosome 10"/>
</dbReference>
<dbReference type="RNAct" id="Q9QXT0">
    <property type="molecule type" value="protein"/>
</dbReference>
<dbReference type="Bgee" id="ENSMUSG00000025381">
    <property type="expression patterns" value="Expressed in renal medulla collecting duct and 260 other cell types or tissues"/>
</dbReference>
<dbReference type="ExpressionAtlas" id="Q9QXT0">
    <property type="expression patterns" value="baseline and differential"/>
</dbReference>
<dbReference type="GO" id="GO:0005783">
    <property type="term" value="C:endoplasmic reticulum"/>
    <property type="evidence" value="ECO:0007669"/>
    <property type="project" value="UniProtKB-SubCell"/>
</dbReference>
<dbReference type="GO" id="GO:0010629">
    <property type="term" value="P:negative regulation of gene expression"/>
    <property type="evidence" value="ECO:0000315"/>
    <property type="project" value="BHF-UCL"/>
</dbReference>
<dbReference type="GO" id="GO:0010988">
    <property type="term" value="P:regulation of low-density lipoprotein particle clearance"/>
    <property type="evidence" value="ECO:0000315"/>
    <property type="project" value="BHF-UCL"/>
</dbReference>
<dbReference type="Gene3D" id="1.10.225.10">
    <property type="entry name" value="Saposin-like"/>
    <property type="match status" value="1"/>
</dbReference>
<dbReference type="InterPro" id="IPR042415">
    <property type="entry name" value="CNPY"/>
</dbReference>
<dbReference type="InterPro" id="IPR021852">
    <property type="entry name" value="DUF3456"/>
</dbReference>
<dbReference type="InterPro" id="IPR008139">
    <property type="entry name" value="SaposinB_dom"/>
</dbReference>
<dbReference type="PANTHER" id="PTHR13341">
    <property type="entry name" value="MIR-INTERACTING SAPOSIN-LIKE PROTEIN"/>
    <property type="match status" value="1"/>
</dbReference>
<dbReference type="PANTHER" id="PTHR13341:SF6">
    <property type="entry name" value="PROTEIN CANOPY HOMOLOG 2"/>
    <property type="match status" value="1"/>
</dbReference>
<dbReference type="Pfam" id="PF11938">
    <property type="entry name" value="DUF3456"/>
    <property type="match status" value="1"/>
</dbReference>
<dbReference type="PROSITE" id="PS00014">
    <property type="entry name" value="ER_TARGET"/>
    <property type="match status" value="1"/>
</dbReference>
<dbReference type="PROSITE" id="PS50015">
    <property type="entry name" value="SAP_B"/>
    <property type="match status" value="1"/>
</dbReference>